<sequence>MISSTMAARVVDPYAEALVSLASAQGLLDTFEADIRFIAAVVQATPELGQFLASPLVKAEAKKNLLQQVFADQIHPLLLNALKLLSDRRRIMFLGAVCQRFLELQRKLKNIVLAEVTTAVPLTEAQQQSIRERVRDFTQASGVELQTSQDPTLLGGVIIKIGSQVIDLSLRGQLRRLALQLA</sequence>
<name>ATPD_SYNJA</name>
<evidence type="ECO:0000255" key="1">
    <source>
        <dbReference type="HAMAP-Rule" id="MF_01416"/>
    </source>
</evidence>
<proteinExistence type="inferred from homology"/>
<reference key="1">
    <citation type="journal article" date="2007" name="ISME J.">
        <title>Population level functional diversity in a microbial community revealed by comparative genomic and metagenomic analyses.</title>
        <authorList>
            <person name="Bhaya D."/>
            <person name="Grossman A.R."/>
            <person name="Steunou A.-S."/>
            <person name="Khuri N."/>
            <person name="Cohan F.M."/>
            <person name="Hamamura N."/>
            <person name="Melendrez M.C."/>
            <person name="Bateson M.M."/>
            <person name="Ward D.M."/>
            <person name="Heidelberg J.F."/>
        </authorList>
    </citation>
    <scope>NUCLEOTIDE SEQUENCE [LARGE SCALE GENOMIC DNA]</scope>
    <source>
        <strain>JA-3-3Ab</strain>
    </source>
</reference>
<dbReference type="EMBL" id="CP000239">
    <property type="protein sequence ID" value="ABD00254.1"/>
    <property type="molecule type" value="Genomic_DNA"/>
</dbReference>
<dbReference type="RefSeq" id="WP_011430928.1">
    <property type="nucleotide sequence ID" value="NC_007775.1"/>
</dbReference>
<dbReference type="SMR" id="Q2JSW0"/>
<dbReference type="STRING" id="321327.CYA_2114"/>
<dbReference type="KEGG" id="cya:CYA_2114"/>
<dbReference type="eggNOG" id="COG0712">
    <property type="taxonomic scope" value="Bacteria"/>
</dbReference>
<dbReference type="HOGENOM" id="CLU_085114_4_0_3"/>
<dbReference type="OrthoDB" id="9802471at2"/>
<dbReference type="Proteomes" id="UP000008818">
    <property type="component" value="Chromosome"/>
</dbReference>
<dbReference type="GO" id="GO:0031676">
    <property type="term" value="C:plasma membrane-derived thylakoid membrane"/>
    <property type="evidence" value="ECO:0007669"/>
    <property type="project" value="UniProtKB-SubCell"/>
</dbReference>
<dbReference type="GO" id="GO:0045259">
    <property type="term" value="C:proton-transporting ATP synthase complex"/>
    <property type="evidence" value="ECO:0007669"/>
    <property type="project" value="UniProtKB-KW"/>
</dbReference>
<dbReference type="GO" id="GO:0046933">
    <property type="term" value="F:proton-transporting ATP synthase activity, rotational mechanism"/>
    <property type="evidence" value="ECO:0007669"/>
    <property type="project" value="UniProtKB-UniRule"/>
</dbReference>
<dbReference type="Gene3D" id="1.10.520.20">
    <property type="entry name" value="N-terminal domain of the delta subunit of the F1F0-ATP synthase"/>
    <property type="match status" value="1"/>
</dbReference>
<dbReference type="HAMAP" id="MF_01416">
    <property type="entry name" value="ATP_synth_delta_bact"/>
    <property type="match status" value="1"/>
</dbReference>
<dbReference type="InterPro" id="IPR026015">
    <property type="entry name" value="ATP_synth_OSCP/delta_N_sf"/>
</dbReference>
<dbReference type="InterPro" id="IPR000711">
    <property type="entry name" value="ATPase_OSCP/dsu"/>
</dbReference>
<dbReference type="NCBIfam" id="TIGR01145">
    <property type="entry name" value="ATP_synt_delta"/>
    <property type="match status" value="1"/>
</dbReference>
<dbReference type="NCBIfam" id="NF004402">
    <property type="entry name" value="PRK05758.2-2"/>
    <property type="match status" value="1"/>
</dbReference>
<dbReference type="PANTHER" id="PTHR11910">
    <property type="entry name" value="ATP SYNTHASE DELTA CHAIN"/>
    <property type="match status" value="1"/>
</dbReference>
<dbReference type="Pfam" id="PF00213">
    <property type="entry name" value="OSCP"/>
    <property type="match status" value="1"/>
</dbReference>
<dbReference type="PRINTS" id="PR00125">
    <property type="entry name" value="ATPASEDELTA"/>
</dbReference>
<dbReference type="SUPFAM" id="SSF47928">
    <property type="entry name" value="N-terminal domain of the delta subunit of the F1F0-ATP synthase"/>
    <property type="match status" value="1"/>
</dbReference>
<feature type="chain" id="PRO_0000371179" description="ATP synthase subunit delta">
    <location>
        <begin position="1"/>
        <end position="182"/>
    </location>
</feature>
<gene>
    <name evidence="1" type="primary">atpH</name>
    <name evidence="1" type="synonym">atpD</name>
    <name type="ordered locus">CYA_2114</name>
</gene>
<organism>
    <name type="scientific">Synechococcus sp. (strain JA-3-3Ab)</name>
    <name type="common">Cyanobacteria bacterium Yellowstone A-Prime</name>
    <dbReference type="NCBI Taxonomy" id="321327"/>
    <lineage>
        <taxon>Bacteria</taxon>
        <taxon>Bacillati</taxon>
        <taxon>Cyanobacteriota</taxon>
        <taxon>Cyanophyceae</taxon>
        <taxon>Synechococcales</taxon>
        <taxon>Synechococcaceae</taxon>
        <taxon>Synechococcus</taxon>
    </lineage>
</organism>
<accession>Q2JSW0</accession>
<comment type="function">
    <text evidence="1">F(1)F(0) ATP synthase produces ATP from ADP in the presence of a proton or sodium gradient. F-type ATPases consist of two structural domains, F(1) containing the extramembraneous catalytic core and F(0) containing the membrane proton channel, linked together by a central stalk and a peripheral stalk. During catalysis, ATP synthesis in the catalytic domain of F(1) is coupled via a rotary mechanism of the central stalk subunits to proton translocation.</text>
</comment>
<comment type="function">
    <text evidence="1">This protein is part of the stalk that links CF(0) to CF(1). It either transmits conformational changes from CF(0) to CF(1) or is implicated in proton conduction.</text>
</comment>
<comment type="subunit">
    <text evidence="1">F-type ATPases have 2 components, F(1) - the catalytic core - and F(0) - the membrane proton channel. F(1) has five subunits: alpha(3), beta(3), gamma(1), delta(1), epsilon(1). CF(0) has four main subunits: a(1), b(1), b'(1) and c(10-14). The alpha and beta chains form an alternating ring which encloses part of the gamma chain. F(1) is attached to F(0) by a central stalk formed by the gamma and epsilon chains, while a peripheral stalk is formed by the delta, b and b' chains.</text>
</comment>
<comment type="subcellular location">
    <subcellularLocation>
        <location evidence="1">Cellular thylakoid membrane</location>
        <topology evidence="1">Peripheral membrane protein</topology>
    </subcellularLocation>
</comment>
<comment type="similarity">
    <text evidence="1">Belongs to the ATPase delta chain family.</text>
</comment>
<keyword id="KW-0066">ATP synthesis</keyword>
<keyword id="KW-0139">CF(1)</keyword>
<keyword id="KW-0375">Hydrogen ion transport</keyword>
<keyword id="KW-0406">Ion transport</keyword>
<keyword id="KW-0472">Membrane</keyword>
<keyword id="KW-0793">Thylakoid</keyword>
<keyword id="KW-0813">Transport</keyword>
<protein>
    <recommendedName>
        <fullName evidence="1">ATP synthase subunit delta</fullName>
    </recommendedName>
    <alternativeName>
        <fullName evidence="1">ATP synthase F(1) sector subunit delta</fullName>
    </alternativeName>
    <alternativeName>
        <fullName evidence="1">F-type ATPase subunit delta</fullName>
        <shortName evidence="1">F-ATPase subunit delta</shortName>
    </alternativeName>
</protein>